<feature type="chain" id="PRO_1000188501" description="HMP-PP phosphatase">
    <location>
        <begin position="1"/>
        <end position="272"/>
    </location>
</feature>
<feature type="active site" description="Nucleophile" evidence="1">
    <location>
        <position position="8"/>
    </location>
</feature>
<feature type="binding site" evidence="1">
    <location>
        <position position="8"/>
    </location>
    <ligand>
        <name>Mg(2+)</name>
        <dbReference type="ChEBI" id="CHEBI:18420"/>
    </ligand>
</feature>
<feature type="binding site" evidence="1">
    <location>
        <position position="10"/>
    </location>
    <ligand>
        <name>Mg(2+)</name>
        <dbReference type="ChEBI" id="CHEBI:18420"/>
    </ligand>
</feature>
<feature type="binding site" evidence="1">
    <location>
        <position position="212"/>
    </location>
    <ligand>
        <name>Mg(2+)</name>
        <dbReference type="ChEBI" id="CHEBI:18420"/>
    </ligand>
</feature>
<evidence type="ECO:0000255" key="1">
    <source>
        <dbReference type="HAMAP-Rule" id="MF_01847"/>
    </source>
</evidence>
<reference key="1">
    <citation type="journal article" date="2009" name="PLoS Genet.">
        <title>Organised genome dynamics in the Escherichia coli species results in highly diverse adaptive paths.</title>
        <authorList>
            <person name="Touchon M."/>
            <person name="Hoede C."/>
            <person name="Tenaillon O."/>
            <person name="Barbe V."/>
            <person name="Baeriswyl S."/>
            <person name="Bidet P."/>
            <person name="Bingen E."/>
            <person name="Bonacorsi S."/>
            <person name="Bouchier C."/>
            <person name="Bouvet O."/>
            <person name="Calteau A."/>
            <person name="Chiapello H."/>
            <person name="Clermont O."/>
            <person name="Cruveiller S."/>
            <person name="Danchin A."/>
            <person name="Diard M."/>
            <person name="Dossat C."/>
            <person name="Karoui M.E."/>
            <person name="Frapy E."/>
            <person name="Garry L."/>
            <person name="Ghigo J.M."/>
            <person name="Gilles A.M."/>
            <person name="Johnson J."/>
            <person name="Le Bouguenec C."/>
            <person name="Lescat M."/>
            <person name="Mangenot S."/>
            <person name="Martinez-Jehanne V."/>
            <person name="Matic I."/>
            <person name="Nassif X."/>
            <person name="Oztas S."/>
            <person name="Petit M.A."/>
            <person name="Pichon C."/>
            <person name="Rouy Z."/>
            <person name="Ruf C.S."/>
            <person name="Schneider D."/>
            <person name="Tourret J."/>
            <person name="Vacherie B."/>
            <person name="Vallenet D."/>
            <person name="Medigue C."/>
            <person name="Rocha E.P.C."/>
            <person name="Denamur E."/>
        </authorList>
    </citation>
    <scope>NUCLEOTIDE SEQUENCE [LARGE SCALE GENOMIC DNA]</scope>
    <source>
        <strain>IAI1</strain>
    </source>
</reference>
<gene>
    <name evidence="1" type="primary">cof</name>
    <name type="ordered locus">ECIAI1_0450</name>
</gene>
<comment type="function">
    <text evidence="1">Catalyzes the hydrolysis of 4-amino-2-methyl-5-hydroxymethylpyrimidine pyrophosphate (HMP-PP) to 4-amino-2-methyl-5-hydroxymethylpyrimidine phosphate (HMP-P).</text>
</comment>
<comment type="catalytic activity">
    <reaction evidence="1">
        <text>4-amino-2-methyl-5-(diphosphooxymethyl)pyrimidine + H2O = 4-amino-2-methyl-5-(phosphooxymethyl)pyrimidine + phosphate + H(+)</text>
        <dbReference type="Rhea" id="RHEA:27914"/>
        <dbReference type="ChEBI" id="CHEBI:15377"/>
        <dbReference type="ChEBI" id="CHEBI:15378"/>
        <dbReference type="ChEBI" id="CHEBI:43474"/>
        <dbReference type="ChEBI" id="CHEBI:57841"/>
        <dbReference type="ChEBI" id="CHEBI:58354"/>
    </reaction>
</comment>
<comment type="cofactor">
    <cofactor evidence="1">
        <name>Mg(2+)</name>
        <dbReference type="ChEBI" id="CHEBI:18420"/>
    </cofactor>
</comment>
<comment type="similarity">
    <text evidence="1">Belongs to the HAD-like hydrolase superfamily. Cof family.</text>
</comment>
<proteinExistence type="inferred from homology"/>
<sequence length="272" mass="30345">MARLAAFDMDGTLLMPDHHLGEKTLSTLARLRERDITLTFATGRHALEMQHILGALSLDAYLITGNGTRVHSLEGELLHRDDLPADVAELVLYQQWDTRASMHIFNDDGWFTGKEIPALLQAFVYSGFRYQIIDVKKMPLGSVTKICFCGDHDDLTRLQIQLYEALGERAHLCFSATDCLEVLPVGCNKGAALTVLTQHLGLSLRDCMAFGDAMNDREMLGCVGSGFIMGNAMPQLRAELPHLPVIGHCRNQAVSHYLTHWLDYPHLPYSPE</sequence>
<accession>B7M3T9</accession>
<name>COF_ECO8A</name>
<protein>
    <recommendedName>
        <fullName evidence="1">HMP-PP phosphatase</fullName>
        <ecNumber evidence="1">3.6.1.-</ecNumber>
    </recommendedName>
</protein>
<keyword id="KW-0378">Hydrolase</keyword>
<keyword id="KW-0460">Magnesium</keyword>
<keyword id="KW-0479">Metal-binding</keyword>
<dbReference type="EC" id="3.6.1.-" evidence="1"/>
<dbReference type="EMBL" id="CU928160">
    <property type="protein sequence ID" value="CAQ97322.1"/>
    <property type="molecule type" value="Genomic_DNA"/>
</dbReference>
<dbReference type="RefSeq" id="WP_001309304.1">
    <property type="nucleotide sequence ID" value="NC_011741.1"/>
</dbReference>
<dbReference type="SMR" id="B7M3T9"/>
<dbReference type="KEGG" id="ecr:ECIAI1_0450"/>
<dbReference type="HOGENOM" id="CLU_044146_5_2_6"/>
<dbReference type="GO" id="GO:0002145">
    <property type="term" value="F:4-amino-5-hydroxymethyl-2-methylpyrimidine diphosphatase activity"/>
    <property type="evidence" value="ECO:0007669"/>
    <property type="project" value="RHEA"/>
</dbReference>
<dbReference type="GO" id="GO:0000287">
    <property type="term" value="F:magnesium ion binding"/>
    <property type="evidence" value="ECO:0000250"/>
    <property type="project" value="UniProtKB"/>
</dbReference>
<dbReference type="GO" id="GO:0016791">
    <property type="term" value="F:phosphatase activity"/>
    <property type="evidence" value="ECO:0000250"/>
    <property type="project" value="UniProtKB"/>
</dbReference>
<dbReference type="CDD" id="cd07516">
    <property type="entry name" value="HAD_Pase"/>
    <property type="match status" value="1"/>
</dbReference>
<dbReference type="FunFam" id="3.30.1240.10:FF:000002">
    <property type="entry name" value="HMP-PP phosphatase"/>
    <property type="match status" value="1"/>
</dbReference>
<dbReference type="Gene3D" id="3.30.1240.10">
    <property type="match status" value="1"/>
</dbReference>
<dbReference type="Gene3D" id="3.40.50.1000">
    <property type="entry name" value="HAD superfamily/HAD-like"/>
    <property type="match status" value="1"/>
</dbReference>
<dbReference type="HAMAP" id="MF_01847">
    <property type="entry name" value="HMP_PP_phosphat"/>
    <property type="match status" value="1"/>
</dbReference>
<dbReference type="InterPro" id="IPR000150">
    <property type="entry name" value="Cof"/>
</dbReference>
<dbReference type="InterPro" id="IPR036412">
    <property type="entry name" value="HAD-like_sf"/>
</dbReference>
<dbReference type="InterPro" id="IPR006379">
    <property type="entry name" value="HAD-SF_hydro_IIB"/>
</dbReference>
<dbReference type="InterPro" id="IPR023214">
    <property type="entry name" value="HAD_sf"/>
</dbReference>
<dbReference type="InterPro" id="IPR023938">
    <property type="entry name" value="HMP-PP_phosphatase"/>
</dbReference>
<dbReference type="NCBIfam" id="TIGR00099">
    <property type="entry name" value="Cof-subfamily"/>
    <property type="match status" value="1"/>
</dbReference>
<dbReference type="NCBIfam" id="TIGR01484">
    <property type="entry name" value="HAD-SF-IIB"/>
    <property type="match status" value="1"/>
</dbReference>
<dbReference type="NCBIfam" id="NF011705">
    <property type="entry name" value="PRK15126.1"/>
    <property type="match status" value="1"/>
</dbReference>
<dbReference type="PANTHER" id="PTHR47267">
    <property type="match status" value="1"/>
</dbReference>
<dbReference type="PANTHER" id="PTHR47267:SF2">
    <property type="entry name" value="HMP-PP PHOSPHATASE"/>
    <property type="match status" value="1"/>
</dbReference>
<dbReference type="Pfam" id="PF08282">
    <property type="entry name" value="Hydrolase_3"/>
    <property type="match status" value="1"/>
</dbReference>
<dbReference type="SFLD" id="SFLDG01140">
    <property type="entry name" value="C2.B:_Phosphomannomutase_and_P"/>
    <property type="match status" value="1"/>
</dbReference>
<dbReference type="SFLD" id="SFLDS00003">
    <property type="entry name" value="Haloacid_Dehalogenase"/>
    <property type="match status" value="1"/>
</dbReference>
<dbReference type="SUPFAM" id="SSF56784">
    <property type="entry name" value="HAD-like"/>
    <property type="match status" value="1"/>
</dbReference>
<dbReference type="PROSITE" id="PS01228">
    <property type="entry name" value="COF_1"/>
    <property type="match status" value="1"/>
</dbReference>
<dbReference type="PROSITE" id="PS01229">
    <property type="entry name" value="COF_2"/>
    <property type="match status" value="1"/>
</dbReference>
<organism>
    <name type="scientific">Escherichia coli O8 (strain IAI1)</name>
    <dbReference type="NCBI Taxonomy" id="585034"/>
    <lineage>
        <taxon>Bacteria</taxon>
        <taxon>Pseudomonadati</taxon>
        <taxon>Pseudomonadota</taxon>
        <taxon>Gammaproteobacteria</taxon>
        <taxon>Enterobacterales</taxon>
        <taxon>Enterobacteriaceae</taxon>
        <taxon>Escherichia</taxon>
    </lineage>
</organism>